<organism>
    <name type="scientific">Wolbachia pipientis wMel</name>
    <dbReference type="NCBI Taxonomy" id="163164"/>
    <lineage>
        <taxon>Bacteria</taxon>
        <taxon>Pseudomonadati</taxon>
        <taxon>Pseudomonadota</taxon>
        <taxon>Alphaproteobacteria</taxon>
        <taxon>Rickettsiales</taxon>
        <taxon>Anaplasmataceae</taxon>
        <taxon>Wolbachieae</taxon>
        <taxon>Wolbachia</taxon>
    </lineage>
</organism>
<proteinExistence type="inferred from homology"/>
<name>RNH2_WOLPM</name>
<keyword id="KW-0963">Cytoplasm</keyword>
<keyword id="KW-0255">Endonuclease</keyword>
<keyword id="KW-0378">Hydrolase</keyword>
<keyword id="KW-0464">Manganese</keyword>
<keyword id="KW-0479">Metal-binding</keyword>
<keyword id="KW-0540">Nuclease</keyword>
<accession>Q73G60</accession>
<gene>
    <name evidence="1" type="primary">rnhB</name>
    <name type="ordered locus">WD_1103</name>
</gene>
<protein>
    <recommendedName>
        <fullName evidence="1">Ribonuclease HII</fullName>
        <shortName evidence="1">RNase HII</shortName>
        <ecNumber evidence="1">3.1.26.4</ecNumber>
    </recommendedName>
</protein>
<reference key="1">
    <citation type="journal article" date="2004" name="PLoS Biol.">
        <title>Phylogenomics of the reproductive parasite Wolbachia pipientis wMel: a streamlined genome overrun by mobile genetic elements.</title>
        <authorList>
            <person name="Wu M."/>
            <person name="Sun L.V."/>
            <person name="Vamathevan J.J."/>
            <person name="Riegler M."/>
            <person name="DeBoy R.T."/>
            <person name="Brownlie J.C."/>
            <person name="McGraw E.A."/>
            <person name="Martin W."/>
            <person name="Esser C."/>
            <person name="Ahmadinejad N."/>
            <person name="Wiegand C."/>
            <person name="Madupu R."/>
            <person name="Beanan M.J."/>
            <person name="Brinkac L.M."/>
            <person name="Daugherty S.C."/>
            <person name="Durkin A.S."/>
            <person name="Kolonay J.F."/>
            <person name="Nelson W.C."/>
            <person name="Mohamoud Y."/>
            <person name="Lee P."/>
            <person name="Berry K.J."/>
            <person name="Young M.B."/>
            <person name="Utterback T.R."/>
            <person name="Weidman J.F."/>
            <person name="Nierman W.C."/>
            <person name="Paulsen I.T."/>
            <person name="Nelson K.E."/>
            <person name="Tettelin H."/>
            <person name="O'Neill S.L."/>
            <person name="Eisen J.A."/>
        </authorList>
    </citation>
    <scope>NUCLEOTIDE SEQUENCE [LARGE SCALE GENOMIC DNA]</scope>
</reference>
<sequence length="198" mass="21980">MKYPDFTLENKLSGVIAGVDEVGRGPLAGPVISAAVVFIDRNTIIDGINDSKKLTPQCRQVLYEKITSVAKFGIGMASVEEINSYNILQATKLSMKRALIDLDLELDYVLVDGNQPPEVKWQVKSIVNGDNLSTSIAAASIVAKVTRDRLMQELHNKHPEYNWYKNKGYGTKEHLNAIGLYGITEHHRKNFAPISRAL</sequence>
<comment type="function">
    <text evidence="1">Endonuclease that specifically degrades the RNA of RNA-DNA hybrids.</text>
</comment>
<comment type="catalytic activity">
    <reaction evidence="1">
        <text>Endonucleolytic cleavage to 5'-phosphomonoester.</text>
        <dbReference type="EC" id="3.1.26.4"/>
    </reaction>
</comment>
<comment type="cofactor">
    <cofactor evidence="1">
        <name>Mn(2+)</name>
        <dbReference type="ChEBI" id="CHEBI:29035"/>
    </cofactor>
    <cofactor evidence="1">
        <name>Mg(2+)</name>
        <dbReference type="ChEBI" id="CHEBI:18420"/>
    </cofactor>
    <text evidence="1">Manganese or magnesium. Binds 1 divalent metal ion per monomer in the absence of substrate. May bind a second metal ion after substrate binding.</text>
</comment>
<comment type="subcellular location">
    <subcellularLocation>
        <location evidence="1">Cytoplasm</location>
    </subcellularLocation>
</comment>
<comment type="similarity">
    <text evidence="1">Belongs to the RNase HII family.</text>
</comment>
<dbReference type="EC" id="3.1.26.4" evidence="1"/>
<dbReference type="EMBL" id="AE017196">
    <property type="protein sequence ID" value="AAS14757.1"/>
    <property type="molecule type" value="Genomic_DNA"/>
</dbReference>
<dbReference type="RefSeq" id="WP_010082329.1">
    <property type="nucleotide sequence ID" value="NZ_OX384529.1"/>
</dbReference>
<dbReference type="SMR" id="Q73G60"/>
<dbReference type="EnsemblBacteria" id="AAS14757">
    <property type="protein sequence ID" value="AAS14757"/>
    <property type="gene ID" value="WD_1103"/>
</dbReference>
<dbReference type="KEGG" id="wol:WD_1103"/>
<dbReference type="eggNOG" id="COG0164">
    <property type="taxonomic scope" value="Bacteria"/>
</dbReference>
<dbReference type="Proteomes" id="UP000008215">
    <property type="component" value="Chromosome"/>
</dbReference>
<dbReference type="GO" id="GO:0005737">
    <property type="term" value="C:cytoplasm"/>
    <property type="evidence" value="ECO:0007669"/>
    <property type="project" value="UniProtKB-SubCell"/>
</dbReference>
<dbReference type="GO" id="GO:0032299">
    <property type="term" value="C:ribonuclease H2 complex"/>
    <property type="evidence" value="ECO:0007669"/>
    <property type="project" value="TreeGrafter"/>
</dbReference>
<dbReference type="GO" id="GO:0030145">
    <property type="term" value="F:manganese ion binding"/>
    <property type="evidence" value="ECO:0007669"/>
    <property type="project" value="UniProtKB-UniRule"/>
</dbReference>
<dbReference type="GO" id="GO:0003723">
    <property type="term" value="F:RNA binding"/>
    <property type="evidence" value="ECO:0007669"/>
    <property type="project" value="InterPro"/>
</dbReference>
<dbReference type="GO" id="GO:0004523">
    <property type="term" value="F:RNA-DNA hybrid ribonuclease activity"/>
    <property type="evidence" value="ECO:0007669"/>
    <property type="project" value="UniProtKB-UniRule"/>
</dbReference>
<dbReference type="GO" id="GO:0043137">
    <property type="term" value="P:DNA replication, removal of RNA primer"/>
    <property type="evidence" value="ECO:0007669"/>
    <property type="project" value="TreeGrafter"/>
</dbReference>
<dbReference type="GO" id="GO:0006298">
    <property type="term" value="P:mismatch repair"/>
    <property type="evidence" value="ECO:0007669"/>
    <property type="project" value="TreeGrafter"/>
</dbReference>
<dbReference type="CDD" id="cd07182">
    <property type="entry name" value="RNase_HII_bacteria_HII_like"/>
    <property type="match status" value="1"/>
</dbReference>
<dbReference type="Gene3D" id="3.30.420.10">
    <property type="entry name" value="Ribonuclease H-like superfamily/Ribonuclease H"/>
    <property type="match status" value="1"/>
</dbReference>
<dbReference type="HAMAP" id="MF_00052_B">
    <property type="entry name" value="RNase_HII_B"/>
    <property type="match status" value="1"/>
</dbReference>
<dbReference type="InterPro" id="IPR022898">
    <property type="entry name" value="RNase_HII"/>
</dbReference>
<dbReference type="InterPro" id="IPR001352">
    <property type="entry name" value="RNase_HII/HIII"/>
</dbReference>
<dbReference type="InterPro" id="IPR024567">
    <property type="entry name" value="RNase_HII/HIII_dom"/>
</dbReference>
<dbReference type="InterPro" id="IPR012337">
    <property type="entry name" value="RNaseH-like_sf"/>
</dbReference>
<dbReference type="InterPro" id="IPR036397">
    <property type="entry name" value="RNaseH_sf"/>
</dbReference>
<dbReference type="NCBIfam" id="NF000595">
    <property type="entry name" value="PRK00015.1-3"/>
    <property type="match status" value="1"/>
</dbReference>
<dbReference type="PANTHER" id="PTHR10954">
    <property type="entry name" value="RIBONUCLEASE H2 SUBUNIT A"/>
    <property type="match status" value="1"/>
</dbReference>
<dbReference type="PANTHER" id="PTHR10954:SF18">
    <property type="entry name" value="RIBONUCLEASE HII"/>
    <property type="match status" value="1"/>
</dbReference>
<dbReference type="Pfam" id="PF01351">
    <property type="entry name" value="RNase_HII"/>
    <property type="match status" value="1"/>
</dbReference>
<dbReference type="SUPFAM" id="SSF53098">
    <property type="entry name" value="Ribonuclease H-like"/>
    <property type="match status" value="1"/>
</dbReference>
<dbReference type="PROSITE" id="PS51975">
    <property type="entry name" value="RNASE_H_2"/>
    <property type="match status" value="1"/>
</dbReference>
<feature type="chain" id="PRO_0000111652" description="Ribonuclease HII">
    <location>
        <begin position="1"/>
        <end position="198"/>
    </location>
</feature>
<feature type="domain" description="RNase H type-2" evidence="2">
    <location>
        <begin position="14"/>
        <end position="198"/>
    </location>
</feature>
<feature type="binding site" evidence="1">
    <location>
        <position position="20"/>
    </location>
    <ligand>
        <name>a divalent metal cation</name>
        <dbReference type="ChEBI" id="CHEBI:60240"/>
    </ligand>
</feature>
<feature type="binding site" evidence="1">
    <location>
        <position position="21"/>
    </location>
    <ligand>
        <name>a divalent metal cation</name>
        <dbReference type="ChEBI" id="CHEBI:60240"/>
    </ligand>
</feature>
<feature type="binding site" evidence="1">
    <location>
        <position position="112"/>
    </location>
    <ligand>
        <name>a divalent metal cation</name>
        <dbReference type="ChEBI" id="CHEBI:60240"/>
    </ligand>
</feature>
<evidence type="ECO:0000255" key="1">
    <source>
        <dbReference type="HAMAP-Rule" id="MF_00052"/>
    </source>
</evidence>
<evidence type="ECO:0000255" key="2">
    <source>
        <dbReference type="PROSITE-ProRule" id="PRU01319"/>
    </source>
</evidence>